<feature type="chain" id="PRO_0000226866" description="Large ribosomal subunit protein bL19">
    <location>
        <begin position="1"/>
        <end position="130"/>
    </location>
</feature>
<gene>
    <name evidence="1" type="primary">rplS</name>
    <name type="ordered locus">Psyc_2016</name>
</gene>
<evidence type="ECO:0000255" key="1">
    <source>
        <dbReference type="HAMAP-Rule" id="MF_00402"/>
    </source>
</evidence>
<evidence type="ECO:0000305" key="2"/>
<protein>
    <recommendedName>
        <fullName evidence="1">Large ribosomal subunit protein bL19</fullName>
    </recommendedName>
    <alternativeName>
        <fullName evidence="2">50S ribosomal protein L19</fullName>
    </alternativeName>
</protein>
<accession>Q4FQ45</accession>
<proteinExistence type="inferred from homology"/>
<keyword id="KW-1185">Reference proteome</keyword>
<keyword id="KW-0687">Ribonucleoprotein</keyword>
<keyword id="KW-0689">Ribosomal protein</keyword>
<name>RL19_PSYA2</name>
<reference key="1">
    <citation type="journal article" date="2010" name="Appl. Environ. Microbiol.">
        <title>The genome sequence of Psychrobacter arcticus 273-4, a psychroactive Siberian permafrost bacterium, reveals mechanisms for adaptation to low-temperature growth.</title>
        <authorList>
            <person name="Ayala-del-Rio H.L."/>
            <person name="Chain P.S."/>
            <person name="Grzymski J.J."/>
            <person name="Ponder M.A."/>
            <person name="Ivanova N."/>
            <person name="Bergholz P.W."/>
            <person name="Di Bartolo G."/>
            <person name="Hauser L."/>
            <person name="Land M."/>
            <person name="Bakermans C."/>
            <person name="Rodrigues D."/>
            <person name="Klappenbach J."/>
            <person name="Zarka D."/>
            <person name="Larimer F."/>
            <person name="Richardson P."/>
            <person name="Murray A."/>
            <person name="Thomashow M."/>
            <person name="Tiedje J.M."/>
        </authorList>
    </citation>
    <scope>NUCLEOTIDE SEQUENCE [LARGE SCALE GENOMIC DNA]</scope>
    <source>
        <strain>DSM 17307 / VKM B-2377 / 273-4</strain>
    </source>
</reference>
<organism>
    <name type="scientific">Psychrobacter arcticus (strain DSM 17307 / VKM B-2377 / 273-4)</name>
    <dbReference type="NCBI Taxonomy" id="259536"/>
    <lineage>
        <taxon>Bacteria</taxon>
        <taxon>Pseudomonadati</taxon>
        <taxon>Pseudomonadota</taxon>
        <taxon>Gammaproteobacteria</taxon>
        <taxon>Moraxellales</taxon>
        <taxon>Moraxellaceae</taxon>
        <taxon>Psychrobacter</taxon>
    </lineage>
</organism>
<comment type="function">
    <text evidence="1">This protein is located at the 30S-50S ribosomal subunit interface and may play a role in the structure and function of the aminoacyl-tRNA binding site.</text>
</comment>
<comment type="similarity">
    <text evidence="1">Belongs to the bacterial ribosomal protein bL19 family.</text>
</comment>
<sequence length="130" mass="14580">MSNKHPLVQVIENAQLIERPSFAPGDTVVVQVKVREGERERLQAFEGVVIAKRNRGLNSAFTVRKISSGVGVERAFQLHSPIIDSIEVKRRGAVRRAKLYYLRERSGKSARIREKLAPRAPKVVKPKADA</sequence>
<dbReference type="EMBL" id="CP000082">
    <property type="protein sequence ID" value="AAZ19863.1"/>
    <property type="molecule type" value="Genomic_DNA"/>
</dbReference>
<dbReference type="RefSeq" id="WP_011281271.1">
    <property type="nucleotide sequence ID" value="NC_007204.1"/>
</dbReference>
<dbReference type="SMR" id="Q4FQ45"/>
<dbReference type="STRING" id="259536.Psyc_2016"/>
<dbReference type="KEGG" id="par:Psyc_2016"/>
<dbReference type="eggNOG" id="COG0335">
    <property type="taxonomic scope" value="Bacteria"/>
</dbReference>
<dbReference type="HOGENOM" id="CLU_103507_2_2_6"/>
<dbReference type="OrthoDB" id="9803541at2"/>
<dbReference type="Proteomes" id="UP000000546">
    <property type="component" value="Chromosome"/>
</dbReference>
<dbReference type="GO" id="GO:0022625">
    <property type="term" value="C:cytosolic large ribosomal subunit"/>
    <property type="evidence" value="ECO:0007669"/>
    <property type="project" value="TreeGrafter"/>
</dbReference>
<dbReference type="GO" id="GO:0003735">
    <property type="term" value="F:structural constituent of ribosome"/>
    <property type="evidence" value="ECO:0007669"/>
    <property type="project" value="InterPro"/>
</dbReference>
<dbReference type="GO" id="GO:0006412">
    <property type="term" value="P:translation"/>
    <property type="evidence" value="ECO:0007669"/>
    <property type="project" value="UniProtKB-UniRule"/>
</dbReference>
<dbReference type="FunFam" id="2.30.30.790:FF:000001">
    <property type="entry name" value="50S ribosomal protein L19"/>
    <property type="match status" value="1"/>
</dbReference>
<dbReference type="Gene3D" id="2.30.30.790">
    <property type="match status" value="1"/>
</dbReference>
<dbReference type="HAMAP" id="MF_00402">
    <property type="entry name" value="Ribosomal_bL19"/>
    <property type="match status" value="1"/>
</dbReference>
<dbReference type="InterPro" id="IPR001857">
    <property type="entry name" value="Ribosomal_bL19"/>
</dbReference>
<dbReference type="InterPro" id="IPR018257">
    <property type="entry name" value="Ribosomal_bL19_CS"/>
</dbReference>
<dbReference type="InterPro" id="IPR038657">
    <property type="entry name" value="Ribosomal_bL19_sf"/>
</dbReference>
<dbReference type="InterPro" id="IPR008991">
    <property type="entry name" value="Translation_prot_SH3-like_sf"/>
</dbReference>
<dbReference type="NCBIfam" id="TIGR01024">
    <property type="entry name" value="rplS_bact"/>
    <property type="match status" value="1"/>
</dbReference>
<dbReference type="PANTHER" id="PTHR15680:SF9">
    <property type="entry name" value="LARGE RIBOSOMAL SUBUNIT PROTEIN BL19M"/>
    <property type="match status" value="1"/>
</dbReference>
<dbReference type="PANTHER" id="PTHR15680">
    <property type="entry name" value="RIBOSOMAL PROTEIN L19"/>
    <property type="match status" value="1"/>
</dbReference>
<dbReference type="Pfam" id="PF01245">
    <property type="entry name" value="Ribosomal_L19"/>
    <property type="match status" value="1"/>
</dbReference>
<dbReference type="PRINTS" id="PR00061">
    <property type="entry name" value="RIBOSOMALL19"/>
</dbReference>
<dbReference type="SUPFAM" id="SSF50104">
    <property type="entry name" value="Translation proteins SH3-like domain"/>
    <property type="match status" value="1"/>
</dbReference>
<dbReference type="PROSITE" id="PS01015">
    <property type="entry name" value="RIBOSOMAL_L19"/>
    <property type="match status" value="1"/>
</dbReference>